<comment type="function">
    <text evidence="1">Catalyzes the decarboxylation of four acetate groups of uroporphyrinogen-III to yield coproporphyrinogen-III.</text>
</comment>
<comment type="catalytic activity">
    <reaction evidence="1">
        <text>uroporphyrinogen III + 4 H(+) = coproporphyrinogen III + 4 CO2</text>
        <dbReference type="Rhea" id="RHEA:19865"/>
        <dbReference type="ChEBI" id="CHEBI:15378"/>
        <dbReference type="ChEBI" id="CHEBI:16526"/>
        <dbReference type="ChEBI" id="CHEBI:57308"/>
        <dbReference type="ChEBI" id="CHEBI:57309"/>
        <dbReference type="EC" id="4.1.1.37"/>
    </reaction>
</comment>
<comment type="pathway">
    <text evidence="1">Porphyrin-containing compound metabolism; protoporphyrin-IX biosynthesis; coproporphyrinogen-III from 5-aminolevulinate: step 4/4.</text>
</comment>
<comment type="subunit">
    <text evidence="1">Homodimer.</text>
</comment>
<comment type="subcellular location">
    <subcellularLocation>
        <location evidence="1">Cytoplasm</location>
    </subcellularLocation>
</comment>
<comment type="similarity">
    <text evidence="1">Belongs to the uroporphyrinogen decarboxylase family.</text>
</comment>
<sequence>MRKLFLDAFGEKKLDKPPVWIMRQAGRYLPEYRAVRAKFDNFMDMCRNADACCEVALHPLQRYDLDAAIVFSDILTIPEAMGMDLKFIKGTGPVFSEPIQSQKDLDKLKSIEDSIGSLDYVYNAVKTTSSAINVPLIGFTGSPWTLAAYMIEGSGSKQFNKLRKMMYANPQLMHSLLQRLADITIIYLLEQVKAGASSVMIFDTWGGILPLEHYKNFSLKYMEYIAKNVKQKINIPIVFFTKGGSNFFEEIKDKSCDGVGVDWSVTLKQARHRIGVGKVLQGNFDPAFLYGSKQSIRETVRANIEFIQSDKLNNYIVNLGHGIYPDIDPDSVRVMIDAIREFSA</sequence>
<keyword id="KW-0963">Cytoplasm</keyword>
<keyword id="KW-0210">Decarboxylase</keyword>
<keyword id="KW-0456">Lyase</keyword>
<keyword id="KW-0627">Porphyrin biosynthesis</keyword>
<keyword id="KW-1185">Reference proteome</keyword>
<protein>
    <recommendedName>
        <fullName evidence="1">Uroporphyrinogen decarboxylase</fullName>
        <shortName evidence="1">UPD</shortName>
        <shortName evidence="1">URO-D</shortName>
        <ecNumber evidence="1">4.1.1.37</ecNumber>
    </recommendedName>
</protein>
<dbReference type="EC" id="4.1.1.37" evidence="1"/>
<dbReference type="EMBL" id="AJ749949">
    <property type="protein sequence ID" value="CAG44680.1"/>
    <property type="molecule type" value="Genomic_DNA"/>
</dbReference>
<dbReference type="RefSeq" id="WP_003022918.1">
    <property type="nucleotide sequence ID" value="NZ_CP010290.1"/>
</dbReference>
<dbReference type="RefSeq" id="YP_169122.1">
    <property type="nucleotide sequence ID" value="NC_006570.2"/>
</dbReference>
<dbReference type="SMR" id="Q5NIM0"/>
<dbReference type="IntAct" id="Q5NIM0">
    <property type="interactions" value="1"/>
</dbReference>
<dbReference type="STRING" id="177416.FTT_0047"/>
<dbReference type="DNASU" id="3192418"/>
<dbReference type="EnsemblBacteria" id="CAG44680">
    <property type="protein sequence ID" value="CAG44680"/>
    <property type="gene ID" value="FTT_0047"/>
</dbReference>
<dbReference type="GeneID" id="75264605"/>
<dbReference type="KEGG" id="ftu:FTT_0047"/>
<dbReference type="eggNOG" id="COG0407">
    <property type="taxonomic scope" value="Bacteria"/>
</dbReference>
<dbReference type="OrthoDB" id="9806656at2"/>
<dbReference type="UniPathway" id="UPA00251">
    <property type="reaction ID" value="UER00321"/>
</dbReference>
<dbReference type="Proteomes" id="UP000001174">
    <property type="component" value="Chromosome"/>
</dbReference>
<dbReference type="GO" id="GO:0005829">
    <property type="term" value="C:cytosol"/>
    <property type="evidence" value="ECO:0007669"/>
    <property type="project" value="TreeGrafter"/>
</dbReference>
<dbReference type="GO" id="GO:0004853">
    <property type="term" value="F:uroporphyrinogen decarboxylase activity"/>
    <property type="evidence" value="ECO:0007669"/>
    <property type="project" value="UniProtKB-UniRule"/>
</dbReference>
<dbReference type="GO" id="GO:0006782">
    <property type="term" value="P:protoporphyrinogen IX biosynthetic process"/>
    <property type="evidence" value="ECO:0007669"/>
    <property type="project" value="UniProtKB-UniRule"/>
</dbReference>
<dbReference type="CDD" id="cd00717">
    <property type="entry name" value="URO-D"/>
    <property type="match status" value="1"/>
</dbReference>
<dbReference type="FunFam" id="3.20.20.210:FF:000008">
    <property type="entry name" value="Uroporphyrinogen decarboxylase"/>
    <property type="match status" value="1"/>
</dbReference>
<dbReference type="Gene3D" id="3.20.20.210">
    <property type="match status" value="1"/>
</dbReference>
<dbReference type="HAMAP" id="MF_00218">
    <property type="entry name" value="URO_D"/>
    <property type="match status" value="1"/>
</dbReference>
<dbReference type="InterPro" id="IPR038071">
    <property type="entry name" value="UROD/MetE-like_sf"/>
</dbReference>
<dbReference type="InterPro" id="IPR006361">
    <property type="entry name" value="Uroporphyrinogen_deCO2ase_HemE"/>
</dbReference>
<dbReference type="InterPro" id="IPR000257">
    <property type="entry name" value="Uroporphyrinogen_deCOase"/>
</dbReference>
<dbReference type="NCBIfam" id="TIGR01464">
    <property type="entry name" value="hemE"/>
    <property type="match status" value="1"/>
</dbReference>
<dbReference type="PANTHER" id="PTHR21091">
    <property type="entry name" value="METHYLTETRAHYDROFOLATE:HOMOCYSTEINE METHYLTRANSFERASE RELATED"/>
    <property type="match status" value="1"/>
</dbReference>
<dbReference type="PANTHER" id="PTHR21091:SF169">
    <property type="entry name" value="UROPORPHYRINOGEN DECARBOXYLASE"/>
    <property type="match status" value="1"/>
</dbReference>
<dbReference type="Pfam" id="PF01208">
    <property type="entry name" value="URO-D"/>
    <property type="match status" value="1"/>
</dbReference>
<dbReference type="SUPFAM" id="SSF51726">
    <property type="entry name" value="UROD/MetE-like"/>
    <property type="match status" value="1"/>
</dbReference>
<dbReference type="PROSITE" id="PS00906">
    <property type="entry name" value="UROD_1"/>
    <property type="match status" value="1"/>
</dbReference>
<dbReference type="PROSITE" id="PS00907">
    <property type="entry name" value="UROD_2"/>
    <property type="match status" value="1"/>
</dbReference>
<evidence type="ECO:0000255" key="1">
    <source>
        <dbReference type="HAMAP-Rule" id="MF_00218"/>
    </source>
</evidence>
<accession>Q5NIM0</accession>
<feature type="chain" id="PRO_0000325643" description="Uroporphyrinogen decarboxylase">
    <location>
        <begin position="1"/>
        <end position="344"/>
    </location>
</feature>
<feature type="binding site" evidence="1">
    <location>
        <begin position="23"/>
        <end position="27"/>
    </location>
    <ligand>
        <name>substrate</name>
    </ligand>
</feature>
<feature type="binding site" evidence="1">
    <location>
        <position position="73"/>
    </location>
    <ligand>
        <name>substrate</name>
    </ligand>
</feature>
<feature type="binding site" evidence="1">
    <location>
        <position position="149"/>
    </location>
    <ligand>
        <name>substrate</name>
    </ligand>
</feature>
<feature type="binding site" evidence="1">
    <location>
        <position position="204"/>
    </location>
    <ligand>
        <name>substrate</name>
    </ligand>
</feature>
<feature type="binding site" evidence="1">
    <location>
        <position position="321"/>
    </location>
    <ligand>
        <name>substrate</name>
    </ligand>
</feature>
<feature type="site" description="Transition state stabilizer" evidence="1">
    <location>
        <position position="73"/>
    </location>
</feature>
<organism>
    <name type="scientific">Francisella tularensis subsp. tularensis (strain SCHU S4 / Schu 4)</name>
    <dbReference type="NCBI Taxonomy" id="177416"/>
    <lineage>
        <taxon>Bacteria</taxon>
        <taxon>Pseudomonadati</taxon>
        <taxon>Pseudomonadota</taxon>
        <taxon>Gammaproteobacteria</taxon>
        <taxon>Thiotrichales</taxon>
        <taxon>Francisellaceae</taxon>
        <taxon>Francisella</taxon>
    </lineage>
</organism>
<name>DCUP_FRATT</name>
<gene>
    <name evidence="1" type="primary">hemE</name>
    <name type="ordered locus">FTT_0047</name>
</gene>
<proteinExistence type="inferred from homology"/>
<reference key="1">
    <citation type="journal article" date="2005" name="Nat. Genet.">
        <title>The complete genome sequence of Francisella tularensis, the causative agent of tularemia.</title>
        <authorList>
            <person name="Larsson P."/>
            <person name="Oyston P.C.F."/>
            <person name="Chain P."/>
            <person name="Chu M.C."/>
            <person name="Duffield M."/>
            <person name="Fuxelius H.-H."/>
            <person name="Garcia E."/>
            <person name="Haelltorp G."/>
            <person name="Johansson D."/>
            <person name="Isherwood K.E."/>
            <person name="Karp P.D."/>
            <person name="Larsson E."/>
            <person name="Liu Y."/>
            <person name="Michell S."/>
            <person name="Prior J."/>
            <person name="Prior R."/>
            <person name="Malfatti S."/>
            <person name="Sjoestedt A."/>
            <person name="Svensson K."/>
            <person name="Thompson N."/>
            <person name="Vergez L."/>
            <person name="Wagg J.K."/>
            <person name="Wren B.W."/>
            <person name="Lindler L.E."/>
            <person name="Andersson S.G.E."/>
            <person name="Forsman M."/>
            <person name="Titball R.W."/>
        </authorList>
    </citation>
    <scope>NUCLEOTIDE SEQUENCE [LARGE SCALE GENOMIC DNA]</scope>
    <source>
        <strain>SCHU S4 / Schu 4</strain>
    </source>
</reference>